<feature type="transit peptide" description="Mitochondrion" evidence="3">
    <location>
        <begin position="1"/>
        <end position="37"/>
    </location>
</feature>
<feature type="chain" id="PRO_0000000524" description="Complex I assembly factor ACAD9, mitochondrial">
    <location>
        <begin position="38"/>
        <end position="621"/>
    </location>
</feature>
<feature type="active site" description="Proton acceptor" evidence="20">
    <location>
        <position position="426"/>
    </location>
</feature>
<feature type="modified residue" description="N6-acetyllysine" evidence="22">
    <location>
        <position position="41"/>
    </location>
</feature>
<feature type="modified residue" description="N6-succinyllysine" evidence="1">
    <location>
        <position position="92"/>
    </location>
</feature>
<feature type="modified residue" description="Phosphothreonine" evidence="1">
    <location>
        <position position="478"/>
    </location>
</feature>
<feature type="modified residue" description="N6-acetyllysine; alternate" evidence="1">
    <location>
        <position position="521"/>
    </location>
</feature>
<feature type="modified residue" description="N6-succinyllysine; alternate" evidence="1">
    <location>
        <position position="521"/>
    </location>
</feature>
<feature type="sequence variant" id="VAR_071892" description="In MC1DN20; dbSNP:rs387907041." evidence="7">
    <original>F</original>
    <variation>I</variation>
    <location>
        <position position="44"/>
    </location>
</feature>
<feature type="sequence variant" id="VAR_071893" description="In MC1DN20." evidence="6">
    <original>R</original>
    <variation>K</variation>
    <location>
        <position position="127"/>
    </location>
</feature>
<feature type="sequence variant" id="VAR_071894" description="In MC1DN20; uncertain significance; dbSNP:rs377547811." evidence="7">
    <original>R</original>
    <variation>W</variation>
    <location>
        <position position="193"/>
    </location>
</feature>
<feature type="sequence variant" id="VAR_071895" description="In MC1DN20." evidence="11">
    <original>A</original>
    <variation>V</variation>
    <location>
        <position position="220"/>
    </location>
</feature>
<feature type="sequence variant" id="VAR_071896" description="In MC1DN20; uncertain significance." evidence="7">
    <original>S</original>
    <variation>F</variation>
    <location>
        <position position="234"/>
    </location>
</feature>
<feature type="sequence variant" id="VAR_071897" description="In MC1DN20; dbSNP:rs387907042." evidence="7">
    <original>R</original>
    <variation>Q</variation>
    <location>
        <position position="266"/>
    </location>
</feature>
<feature type="sequence variant" id="VAR_076177" description="In MC1DN20." evidence="13">
    <original>C</original>
    <variation>G</variation>
    <location>
        <position position="271"/>
    </location>
</feature>
<feature type="sequence variant" id="VAR_071898" description="In MC1DN20; uncertain significance; dbSNP:rs143383023." evidence="7">
    <original>G</original>
    <variation>S</variation>
    <location>
        <position position="303"/>
    </location>
</feature>
<feature type="sequence variant" id="VAR_071899" description="In MC1DN20; likely benign; dbSNP:rs115532916." evidence="7">
    <original>A</original>
    <variation>T</variation>
    <location>
        <position position="326"/>
    </location>
</feature>
<feature type="sequence variant" id="VAR_076178" description="In MC1DN20; dbSNP:rs1447947184." evidence="13">
    <original>V</original>
    <variation>M</variation>
    <location>
        <position position="384"/>
    </location>
</feature>
<feature type="sequence variant" id="VAR_071900" description="In MC1DN20; uncertain significance; dbSNP:rs149753643." evidence="5">
    <original>E</original>
    <variation>K</variation>
    <location>
        <position position="413"/>
    </location>
</feature>
<feature type="sequence variant" id="VAR_071901" description="In MC1DN20; dbSNP:rs777282696." evidence="10">
    <original>R</original>
    <variation>C</variation>
    <location>
        <position position="414"/>
    </location>
</feature>
<feature type="sequence variant" id="VAR_071902" description="In MC1DN20; dbSNP:rs368949613." evidence="7">
    <original>R</original>
    <variation>C</variation>
    <location>
        <position position="417"/>
    </location>
</feature>
<feature type="sequence variant" id="VAR_071903" description="In MC1DN20; dbSNP:rs139145143." evidence="6">
    <original>R</original>
    <variation>W</variation>
    <location>
        <position position="469"/>
    </location>
</feature>
<feature type="sequence variant" id="VAR_033459" description="In dbSNP:rs4494951.">
    <original>R</original>
    <variation>Q</variation>
    <location>
        <position position="477"/>
    </location>
</feature>
<feature type="sequence variant" id="VAR_071904" description="In MC1DN20; dbSNP:rs781149699." evidence="5">
    <original>R</original>
    <variation>H</variation>
    <location>
        <position position="518"/>
    </location>
</feature>
<feature type="sequence variant" id="VAR_071905" description="In MC1DN20; dbSNP:rs377022708." evidence="6 7 9">
    <original>R</original>
    <variation>W</variation>
    <location>
        <position position="532"/>
    </location>
</feature>
<feature type="sequence variant" id="VAR_076179" description="In MC1DN20." evidence="13">
    <original>L</original>
    <variation>H</variation>
    <location>
        <position position="606"/>
    </location>
</feature>
<feature type="mutagenesis site" description="Loss of long-chain-acyl-CoA dehydrogenase activity. Does not affect mitochondrial complex I assembly." evidence="12">
    <original>E</original>
    <variation>Q</variation>
    <location>
        <position position="426"/>
    </location>
</feature>
<feature type="sequence conflict" description="In Ref. 1; AAL56011." evidence="18" ref="1">
    <original>A</original>
    <variation>V</variation>
    <location>
        <position position="397"/>
    </location>
</feature>
<feature type="helix" evidence="23">
    <location>
        <begin position="40"/>
        <end position="43"/>
    </location>
</feature>
<feature type="turn" evidence="23">
    <location>
        <begin position="44"/>
        <end position="46"/>
    </location>
</feature>
<feature type="strand" evidence="23">
    <location>
        <begin position="52"/>
        <end position="55"/>
    </location>
</feature>
<feature type="helix" evidence="23">
    <location>
        <begin position="61"/>
        <end position="70"/>
    </location>
</feature>
<feature type="helix" evidence="23">
    <location>
        <begin position="75"/>
        <end position="80"/>
    </location>
</feature>
<feature type="helix" evidence="23">
    <location>
        <begin position="84"/>
        <end position="90"/>
    </location>
</feature>
<feature type="helix" evidence="23">
    <location>
        <begin position="95"/>
        <end position="104"/>
    </location>
</feature>
<feature type="turn" evidence="23">
    <location>
        <begin position="105"/>
        <end position="107"/>
    </location>
</feature>
<feature type="strand" evidence="23">
    <location>
        <begin position="108"/>
        <end position="111"/>
    </location>
</feature>
<feature type="helix" evidence="23">
    <location>
        <begin position="113"/>
        <end position="115"/>
    </location>
</feature>
<feature type="helix" evidence="23">
    <location>
        <begin position="122"/>
        <end position="132"/>
    </location>
</feature>
<feature type="strand" evidence="23">
    <location>
        <begin position="135"/>
        <end position="137"/>
    </location>
</feature>
<feature type="helix" evidence="23">
    <location>
        <begin position="138"/>
        <end position="146"/>
    </location>
</feature>
<feature type="turn" evidence="23">
    <location>
        <begin position="147"/>
        <end position="150"/>
    </location>
</feature>
<feature type="helix" evidence="23">
    <location>
        <begin position="151"/>
        <end position="156"/>
    </location>
</feature>
<feature type="helix" evidence="23">
    <location>
        <begin position="159"/>
        <end position="170"/>
    </location>
</feature>
<feature type="strand" evidence="23">
    <location>
        <begin position="176"/>
        <end position="179"/>
    </location>
</feature>
<feature type="strand" evidence="23">
    <location>
        <begin position="185"/>
        <end position="191"/>
    </location>
</feature>
<feature type="strand" evidence="23">
    <location>
        <begin position="195"/>
        <end position="198"/>
    </location>
</feature>
<feature type="strand" evidence="23">
    <location>
        <begin position="202"/>
        <end position="215"/>
    </location>
</feature>
<feature type="turn" evidence="23">
    <location>
        <begin position="216"/>
        <end position="219"/>
    </location>
</feature>
<feature type="strand" evidence="23">
    <location>
        <begin position="221"/>
        <end position="230"/>
    </location>
</feature>
<feature type="strand" evidence="23">
    <location>
        <begin position="240"/>
        <end position="248"/>
    </location>
</feature>
<feature type="helix" evidence="23">
    <location>
        <begin position="249"/>
        <end position="251"/>
    </location>
</feature>
<feature type="strand" evidence="23">
    <location>
        <begin position="254"/>
        <end position="256"/>
    </location>
</feature>
<feature type="strand" evidence="23">
    <location>
        <begin position="262"/>
        <end position="264"/>
    </location>
</feature>
<feature type="strand" evidence="23">
    <location>
        <begin position="270"/>
        <end position="281"/>
    </location>
</feature>
<feature type="strand" evidence="23">
    <location>
        <begin position="285"/>
        <end position="288"/>
    </location>
</feature>
<feature type="turn" evidence="23">
    <location>
        <begin position="289"/>
        <end position="292"/>
    </location>
</feature>
<feature type="helix" evidence="23">
    <location>
        <begin position="293"/>
        <end position="302"/>
    </location>
</feature>
<feature type="helix" evidence="23">
    <location>
        <begin position="307"/>
        <end position="327"/>
    </location>
</feature>
<feature type="strand" evidence="23">
    <location>
        <begin position="330"/>
        <end position="335"/>
    </location>
</feature>
<feature type="helix" evidence="23">
    <location>
        <begin position="336"/>
        <end position="338"/>
    </location>
</feature>
<feature type="helix" evidence="23">
    <location>
        <begin position="340"/>
        <end position="367"/>
    </location>
</feature>
<feature type="strand" evidence="23">
    <location>
        <begin position="369"/>
        <end position="371"/>
    </location>
</feature>
<feature type="helix" evidence="23">
    <location>
        <begin position="376"/>
        <end position="400"/>
    </location>
</feature>
<feature type="helix" evidence="23">
    <location>
        <begin position="402"/>
        <end position="404"/>
    </location>
</feature>
<feature type="helix" evidence="23">
    <location>
        <begin position="413"/>
        <end position="418"/>
    </location>
</feature>
<feature type="helix" evidence="23">
    <location>
        <begin position="419"/>
        <end position="423"/>
    </location>
</feature>
<feature type="strand" evidence="23">
    <location>
        <begin position="425"/>
        <end position="427"/>
    </location>
</feature>
<feature type="helix" evidence="23">
    <location>
        <begin position="429"/>
        <end position="452"/>
    </location>
</feature>
<feature type="helix" evidence="23">
    <location>
        <begin position="492"/>
        <end position="494"/>
    </location>
</feature>
<feature type="helix" evidence="23">
    <location>
        <begin position="495"/>
        <end position="519"/>
    </location>
</feature>
<feature type="helix" evidence="23">
    <location>
        <begin position="520"/>
        <end position="524"/>
    </location>
</feature>
<feature type="helix" evidence="23">
    <location>
        <begin position="527"/>
        <end position="556"/>
    </location>
</feature>
<feature type="helix" evidence="23">
    <location>
        <begin position="561"/>
        <end position="584"/>
    </location>
</feature>
<feature type="helix" evidence="23">
    <location>
        <begin position="596"/>
        <end position="608"/>
    </location>
</feature>
<gene>
    <name evidence="21" type="primary">ACAD9</name>
</gene>
<keyword id="KW-0002">3D-structure</keyword>
<keyword id="KW-0007">Acetylation</keyword>
<keyword id="KW-0225">Disease variant</keyword>
<keyword id="KW-0274">FAD</keyword>
<keyword id="KW-0285">Flavoprotein</keyword>
<keyword id="KW-0472">Membrane</keyword>
<keyword id="KW-0496">Mitochondrion</keyword>
<keyword id="KW-0999">Mitochondrion inner membrane</keyword>
<keyword id="KW-0560">Oxidoreductase</keyword>
<keyword id="KW-0597">Phosphoprotein</keyword>
<keyword id="KW-1274">Primary mitochondrial disease</keyword>
<keyword id="KW-1267">Proteomics identification</keyword>
<keyword id="KW-1185">Reference proteome</keyword>
<keyword id="KW-0809">Transit peptide</keyword>
<proteinExistence type="evidence at protein level"/>
<accession>Q9H845</accession>
<accession>D3DNB8</accession>
<accession>Q8WXX3</accession>
<dbReference type="EC" id="1.3.8.-" evidence="2 3 8 12"/>
<dbReference type="EMBL" id="AF327351">
    <property type="protein sequence ID" value="AAL56011.1"/>
    <property type="molecule type" value="mRNA"/>
</dbReference>
<dbReference type="EMBL" id="AK024012">
    <property type="protein sequence ID" value="BAB14775.1"/>
    <property type="molecule type" value="mRNA"/>
</dbReference>
<dbReference type="EMBL" id="CH471052">
    <property type="protein sequence ID" value="EAW79295.1"/>
    <property type="molecule type" value="Genomic_DNA"/>
</dbReference>
<dbReference type="EMBL" id="CH471052">
    <property type="protein sequence ID" value="EAW79296.1"/>
    <property type="molecule type" value="Genomic_DNA"/>
</dbReference>
<dbReference type="EMBL" id="BC013354">
    <property type="protein sequence ID" value="AAH13354.1"/>
    <property type="molecule type" value="mRNA"/>
</dbReference>
<dbReference type="EMBL" id="BC007970">
    <property type="protein sequence ID" value="AAH07970.1"/>
    <property type="molecule type" value="mRNA"/>
</dbReference>
<dbReference type="CCDS" id="CCDS3053.1"/>
<dbReference type="PIR" id="JC7892">
    <property type="entry name" value="JC7892"/>
</dbReference>
<dbReference type="RefSeq" id="NP_054768.2">
    <property type="nucleotide sequence ID" value="NM_014049.4"/>
</dbReference>
<dbReference type="PDB" id="8PHE">
    <property type="method" value="EM"/>
    <property type="resolution" value="3.10 A"/>
    <property type="chains" value="A/B=38-621"/>
</dbReference>
<dbReference type="PDB" id="8PHF">
    <property type="method" value="EM"/>
    <property type="resolution" value="3.60 A"/>
    <property type="chains" value="A/B=38-621"/>
</dbReference>
<dbReference type="PDBsum" id="8PHE"/>
<dbReference type="PDBsum" id="8PHF"/>
<dbReference type="EMDB" id="EMD-17659"/>
<dbReference type="EMDB" id="EMD-17660"/>
<dbReference type="EMDB" id="EMD-17661"/>
<dbReference type="SASBDB" id="Q9H845"/>
<dbReference type="SMR" id="Q9H845"/>
<dbReference type="BioGRID" id="118799">
    <property type="interactions" value="450"/>
</dbReference>
<dbReference type="ComplexPortal" id="CPX-6322">
    <property type="entry name" value="Mitochondrial complex I intermediate assembly (MCIA) complex"/>
</dbReference>
<dbReference type="DIP" id="DIP-53699N"/>
<dbReference type="FunCoup" id="Q9H845">
    <property type="interactions" value="1888"/>
</dbReference>
<dbReference type="IntAct" id="Q9H845">
    <property type="interactions" value="122"/>
</dbReference>
<dbReference type="MINT" id="Q9H845"/>
<dbReference type="STRING" id="9606.ENSP00000312618"/>
<dbReference type="SwissLipids" id="SLP:000000619"/>
<dbReference type="GlyGen" id="Q9H845">
    <property type="glycosylation" value="4 sites, 1 N-linked glycan (1 site), 1 O-linked glycan (3 sites)"/>
</dbReference>
<dbReference type="iPTMnet" id="Q9H845"/>
<dbReference type="MetOSite" id="Q9H845"/>
<dbReference type="PhosphoSitePlus" id="Q9H845"/>
<dbReference type="SwissPalm" id="Q9H845"/>
<dbReference type="BioMuta" id="ACAD9"/>
<dbReference type="DMDM" id="32469596"/>
<dbReference type="jPOST" id="Q9H845"/>
<dbReference type="MassIVE" id="Q9H845"/>
<dbReference type="PaxDb" id="9606-ENSP00000312618"/>
<dbReference type="PeptideAtlas" id="Q9H845"/>
<dbReference type="ProteomicsDB" id="81177"/>
<dbReference type="Pumba" id="Q9H845"/>
<dbReference type="Antibodypedia" id="33213">
    <property type="antibodies" value="171 antibodies from 25 providers"/>
</dbReference>
<dbReference type="DNASU" id="28976"/>
<dbReference type="Ensembl" id="ENST00000308982.12">
    <property type="protein sequence ID" value="ENSP00000312618.7"/>
    <property type="gene ID" value="ENSG00000177646.20"/>
</dbReference>
<dbReference type="Ensembl" id="ENST00000681583.1">
    <property type="protein sequence ID" value="ENSP00000506340.1"/>
    <property type="gene ID" value="ENSG00000177646.20"/>
</dbReference>
<dbReference type="GeneID" id="28976"/>
<dbReference type="KEGG" id="hsa:28976"/>
<dbReference type="MANE-Select" id="ENST00000308982.12">
    <property type="protein sequence ID" value="ENSP00000312618.7"/>
    <property type="RefSeq nucleotide sequence ID" value="NM_014049.5"/>
    <property type="RefSeq protein sequence ID" value="NP_054768.2"/>
</dbReference>
<dbReference type="UCSC" id="uc003ela.5">
    <property type="organism name" value="human"/>
</dbReference>
<dbReference type="AGR" id="HGNC:21497"/>
<dbReference type="CTD" id="28976"/>
<dbReference type="DisGeNET" id="28976"/>
<dbReference type="GeneCards" id="ACAD9"/>
<dbReference type="HGNC" id="HGNC:21497">
    <property type="gene designation" value="ACAD9"/>
</dbReference>
<dbReference type="HPA" id="ENSG00000177646">
    <property type="expression patterns" value="Low tissue specificity"/>
</dbReference>
<dbReference type="MalaCards" id="ACAD9"/>
<dbReference type="MIM" id="611103">
    <property type="type" value="gene"/>
</dbReference>
<dbReference type="MIM" id="611126">
    <property type="type" value="phenotype"/>
</dbReference>
<dbReference type="neXtProt" id="NX_Q9H845"/>
<dbReference type="OpenTargets" id="ENSG00000177646"/>
<dbReference type="Orphanet" id="99901">
    <property type="disease" value="Acyl-CoA dehydrogenase 9 deficiency"/>
</dbReference>
<dbReference type="PharmGKB" id="PA134900655"/>
<dbReference type="VEuPathDB" id="HostDB:ENSG00000177646"/>
<dbReference type="eggNOG" id="KOG0137">
    <property type="taxonomic scope" value="Eukaryota"/>
</dbReference>
<dbReference type="GeneTree" id="ENSGT00940000157312"/>
<dbReference type="HOGENOM" id="CLU_018204_11_2_1"/>
<dbReference type="InParanoid" id="Q9H845"/>
<dbReference type="OMA" id="CDLANDW"/>
<dbReference type="OrthoDB" id="2588832at2759"/>
<dbReference type="PAN-GO" id="Q9H845">
    <property type="GO annotations" value="3 GO annotations based on evolutionary models"/>
</dbReference>
<dbReference type="PhylomeDB" id="Q9H845"/>
<dbReference type="TreeFam" id="TF105053"/>
<dbReference type="PathwayCommons" id="Q9H845"/>
<dbReference type="Reactome" id="R-HSA-6799198">
    <property type="pathway name" value="Complex I biogenesis"/>
</dbReference>
<dbReference type="SABIO-RK" id="Q9H845"/>
<dbReference type="SignaLink" id="Q9H845"/>
<dbReference type="BioGRID-ORCS" id="28976">
    <property type="hits" value="103 hits in 1173 CRISPR screens"/>
</dbReference>
<dbReference type="GeneWiki" id="ACAD9"/>
<dbReference type="GenomeRNAi" id="28976"/>
<dbReference type="Pharos" id="Q9H845">
    <property type="development level" value="Tbio"/>
</dbReference>
<dbReference type="PRO" id="PR:Q9H845"/>
<dbReference type="Proteomes" id="UP000005640">
    <property type="component" value="Chromosome 3"/>
</dbReference>
<dbReference type="RNAct" id="Q9H845">
    <property type="molecule type" value="protein"/>
</dbReference>
<dbReference type="Bgee" id="ENSG00000177646">
    <property type="expression patterns" value="Expressed in upper arm skin and 178 other cell types or tissues"/>
</dbReference>
<dbReference type="ExpressionAtlas" id="Q9H845">
    <property type="expression patterns" value="baseline and differential"/>
</dbReference>
<dbReference type="GO" id="GO:0030425">
    <property type="term" value="C:dendrite"/>
    <property type="evidence" value="ECO:0000314"/>
    <property type="project" value="UniProtKB"/>
</dbReference>
<dbReference type="GO" id="GO:0005743">
    <property type="term" value="C:mitochondrial inner membrane"/>
    <property type="evidence" value="ECO:0000304"/>
    <property type="project" value="Reactome"/>
</dbReference>
<dbReference type="GO" id="GO:0031966">
    <property type="term" value="C:mitochondrial membrane"/>
    <property type="evidence" value="ECO:0000314"/>
    <property type="project" value="BHF-UCL"/>
</dbReference>
<dbReference type="GO" id="GO:0005739">
    <property type="term" value="C:mitochondrion"/>
    <property type="evidence" value="ECO:0000314"/>
    <property type="project" value="UniProtKB"/>
</dbReference>
<dbReference type="GO" id="GO:0005634">
    <property type="term" value="C:nucleus"/>
    <property type="evidence" value="ECO:0000314"/>
    <property type="project" value="UniProtKB"/>
</dbReference>
<dbReference type="GO" id="GO:0003995">
    <property type="term" value="F:acyl-CoA dehydrogenase activity"/>
    <property type="evidence" value="ECO:0000318"/>
    <property type="project" value="GO_Central"/>
</dbReference>
<dbReference type="GO" id="GO:0050660">
    <property type="term" value="F:flavin adenine dinucleotide binding"/>
    <property type="evidence" value="ECO:0007669"/>
    <property type="project" value="InterPro"/>
</dbReference>
<dbReference type="GO" id="GO:0004466">
    <property type="term" value="F:long-chain fatty acyl-CoA dehydrogenase activity"/>
    <property type="evidence" value="ECO:0000314"/>
    <property type="project" value="BHF-UCL"/>
</dbReference>
<dbReference type="GO" id="GO:0070991">
    <property type="term" value="F:medium-chain fatty acyl-CoA dehydrogenase activity"/>
    <property type="evidence" value="ECO:0000314"/>
    <property type="project" value="BHF-UCL"/>
</dbReference>
<dbReference type="GO" id="GO:0001676">
    <property type="term" value="P:long-chain fatty acid metabolic process"/>
    <property type="evidence" value="ECO:0000314"/>
    <property type="project" value="BHF-UCL"/>
</dbReference>
<dbReference type="GO" id="GO:0051791">
    <property type="term" value="P:medium-chain fatty acid metabolic process"/>
    <property type="evidence" value="ECO:0000314"/>
    <property type="project" value="BHF-UCL"/>
</dbReference>
<dbReference type="GO" id="GO:0032981">
    <property type="term" value="P:mitochondrial respiratory chain complex I assembly"/>
    <property type="evidence" value="ECO:0000315"/>
    <property type="project" value="UniProtKB"/>
</dbReference>
<dbReference type="CDD" id="cd01161">
    <property type="entry name" value="VLCAD"/>
    <property type="match status" value="1"/>
</dbReference>
<dbReference type="FunFam" id="1.20.140.10:FF:000023">
    <property type="entry name" value="Acyl-CoA dehydrogenase family member 9"/>
    <property type="match status" value="1"/>
</dbReference>
<dbReference type="FunFam" id="1.20.140.10:FF:000008">
    <property type="entry name" value="acyl-CoA dehydrogenase family member 9, mitochondrial"/>
    <property type="match status" value="1"/>
</dbReference>
<dbReference type="FunFam" id="2.40.110.10:FF:000006">
    <property type="entry name" value="very long-chain specific acyl-CoA dehydrogenase, mitochondrial"/>
    <property type="match status" value="1"/>
</dbReference>
<dbReference type="FunFam" id="1.10.540.10:FF:000001">
    <property type="entry name" value="Very long-chain-specific acyl-CoA dehydrogenase, mitochondrial"/>
    <property type="match status" value="1"/>
</dbReference>
<dbReference type="Gene3D" id="1.10.540.10">
    <property type="entry name" value="Acyl-CoA dehydrogenase/oxidase, N-terminal domain"/>
    <property type="match status" value="1"/>
</dbReference>
<dbReference type="Gene3D" id="2.40.110.10">
    <property type="entry name" value="Butyryl-CoA Dehydrogenase, subunit A, domain 2"/>
    <property type="match status" value="1"/>
</dbReference>
<dbReference type="Gene3D" id="1.20.140.10">
    <property type="entry name" value="Butyryl-CoA Dehydrogenase, subunit A, domain 3"/>
    <property type="match status" value="2"/>
</dbReference>
<dbReference type="InterPro" id="IPR049448">
    <property type="entry name" value="ACAD9/ACADV-like_C"/>
</dbReference>
<dbReference type="InterPro" id="IPR006089">
    <property type="entry name" value="Acyl-CoA_DH_CS"/>
</dbReference>
<dbReference type="InterPro" id="IPR006091">
    <property type="entry name" value="Acyl-CoA_Oxase/DH_mid-dom"/>
</dbReference>
<dbReference type="InterPro" id="IPR046373">
    <property type="entry name" value="Acyl-CoA_Oxase/DH_mid-dom_sf"/>
</dbReference>
<dbReference type="InterPro" id="IPR036250">
    <property type="entry name" value="AcylCo_DH-like_C"/>
</dbReference>
<dbReference type="InterPro" id="IPR009075">
    <property type="entry name" value="AcylCo_DH/oxidase_C"/>
</dbReference>
<dbReference type="InterPro" id="IPR013786">
    <property type="entry name" value="AcylCoA_DH/ox_N"/>
</dbReference>
<dbReference type="InterPro" id="IPR037069">
    <property type="entry name" value="AcylCoA_DH/ox_N_sf"/>
</dbReference>
<dbReference type="InterPro" id="IPR009100">
    <property type="entry name" value="AcylCoA_DH/oxidase_NM_dom_sf"/>
</dbReference>
<dbReference type="PANTHER" id="PTHR43884">
    <property type="entry name" value="ACYL-COA DEHYDROGENASE"/>
    <property type="match status" value="1"/>
</dbReference>
<dbReference type="PANTHER" id="PTHR43884:SF9">
    <property type="entry name" value="COMPLEX I ASSEMBLY FACTOR ACAD9, MITOCHONDRIAL"/>
    <property type="match status" value="1"/>
</dbReference>
<dbReference type="Pfam" id="PF21343">
    <property type="entry name" value="ACAD9-ACADV_C"/>
    <property type="match status" value="1"/>
</dbReference>
<dbReference type="Pfam" id="PF00441">
    <property type="entry name" value="Acyl-CoA_dh_1"/>
    <property type="match status" value="1"/>
</dbReference>
<dbReference type="Pfam" id="PF02770">
    <property type="entry name" value="Acyl-CoA_dh_M"/>
    <property type="match status" value="1"/>
</dbReference>
<dbReference type="Pfam" id="PF02771">
    <property type="entry name" value="Acyl-CoA_dh_N"/>
    <property type="match status" value="1"/>
</dbReference>
<dbReference type="SUPFAM" id="SSF47203">
    <property type="entry name" value="Acyl-CoA dehydrogenase C-terminal domain-like"/>
    <property type="match status" value="2"/>
</dbReference>
<dbReference type="SUPFAM" id="SSF56645">
    <property type="entry name" value="Acyl-CoA dehydrogenase NM domain-like"/>
    <property type="match status" value="1"/>
</dbReference>
<dbReference type="PROSITE" id="PS00072">
    <property type="entry name" value="ACYL_COA_DH_1"/>
    <property type="match status" value="1"/>
</dbReference>
<dbReference type="PROSITE" id="PS00073">
    <property type="entry name" value="ACYL_COA_DH_2"/>
    <property type="match status" value="1"/>
</dbReference>
<organism>
    <name type="scientific">Homo sapiens</name>
    <name type="common">Human</name>
    <dbReference type="NCBI Taxonomy" id="9606"/>
    <lineage>
        <taxon>Eukaryota</taxon>
        <taxon>Metazoa</taxon>
        <taxon>Chordata</taxon>
        <taxon>Craniata</taxon>
        <taxon>Vertebrata</taxon>
        <taxon>Euteleostomi</taxon>
        <taxon>Mammalia</taxon>
        <taxon>Eutheria</taxon>
        <taxon>Euarchontoglires</taxon>
        <taxon>Primates</taxon>
        <taxon>Haplorrhini</taxon>
        <taxon>Catarrhini</taxon>
        <taxon>Hominidae</taxon>
        <taxon>Homo</taxon>
    </lineage>
</organism>
<reference key="1">
    <citation type="journal article" date="2002" name="Biochem. Biophys. Res. Commun.">
        <title>Cloning and functional characterization of ACAD-9, a novel member of human acyl-CoA dehydrogenase family.</title>
        <authorList>
            <person name="Zhang J."/>
            <person name="Zhang W."/>
            <person name="Zou D."/>
            <person name="Chen G."/>
            <person name="Wan T."/>
            <person name="Zhang M."/>
            <person name="Cao X."/>
        </authorList>
    </citation>
    <scope>NUCLEOTIDE SEQUENCE [MRNA]</scope>
    <scope>FUNCTION</scope>
    <scope>CATALYTIC ACTIVITY</scope>
    <scope>TISSUE SPECIFICITY</scope>
    <source>
        <tissue>Dendritic cell</tissue>
    </source>
</reference>
<reference key="2">
    <citation type="journal article" date="2004" name="Nat. Genet.">
        <title>Complete sequencing and characterization of 21,243 full-length human cDNAs.</title>
        <authorList>
            <person name="Ota T."/>
            <person name="Suzuki Y."/>
            <person name="Nishikawa T."/>
            <person name="Otsuki T."/>
            <person name="Sugiyama T."/>
            <person name="Irie R."/>
            <person name="Wakamatsu A."/>
            <person name="Hayashi K."/>
            <person name="Sato H."/>
            <person name="Nagai K."/>
            <person name="Kimura K."/>
            <person name="Makita H."/>
            <person name="Sekine M."/>
            <person name="Obayashi M."/>
            <person name="Nishi T."/>
            <person name="Shibahara T."/>
            <person name="Tanaka T."/>
            <person name="Ishii S."/>
            <person name="Yamamoto J."/>
            <person name="Saito K."/>
            <person name="Kawai Y."/>
            <person name="Isono Y."/>
            <person name="Nakamura Y."/>
            <person name="Nagahari K."/>
            <person name="Murakami K."/>
            <person name="Yasuda T."/>
            <person name="Iwayanagi T."/>
            <person name="Wagatsuma M."/>
            <person name="Shiratori A."/>
            <person name="Sudo H."/>
            <person name="Hosoiri T."/>
            <person name="Kaku Y."/>
            <person name="Kodaira H."/>
            <person name="Kondo H."/>
            <person name="Sugawara M."/>
            <person name="Takahashi M."/>
            <person name="Kanda K."/>
            <person name="Yokoi T."/>
            <person name="Furuya T."/>
            <person name="Kikkawa E."/>
            <person name="Omura Y."/>
            <person name="Abe K."/>
            <person name="Kamihara K."/>
            <person name="Katsuta N."/>
            <person name="Sato K."/>
            <person name="Tanikawa M."/>
            <person name="Yamazaki M."/>
            <person name="Ninomiya K."/>
            <person name="Ishibashi T."/>
            <person name="Yamashita H."/>
            <person name="Murakawa K."/>
            <person name="Fujimori K."/>
            <person name="Tanai H."/>
            <person name="Kimata M."/>
            <person name="Watanabe M."/>
            <person name="Hiraoka S."/>
            <person name="Chiba Y."/>
            <person name="Ishida S."/>
            <person name="Ono Y."/>
            <person name="Takiguchi S."/>
            <person name="Watanabe S."/>
            <person name="Yosida M."/>
            <person name="Hotuta T."/>
            <person name="Kusano J."/>
            <person name="Kanehori K."/>
            <person name="Takahashi-Fujii A."/>
            <person name="Hara H."/>
            <person name="Tanase T.-O."/>
            <person name="Nomura Y."/>
            <person name="Togiya S."/>
            <person name="Komai F."/>
            <person name="Hara R."/>
            <person name="Takeuchi K."/>
            <person name="Arita M."/>
            <person name="Imose N."/>
            <person name="Musashino K."/>
            <person name="Yuuki H."/>
            <person name="Oshima A."/>
            <person name="Sasaki N."/>
            <person name="Aotsuka S."/>
            <person name="Yoshikawa Y."/>
            <person name="Matsunawa H."/>
            <person name="Ichihara T."/>
            <person name="Shiohata N."/>
            <person name="Sano S."/>
            <person name="Moriya S."/>
            <person name="Momiyama H."/>
            <person name="Satoh N."/>
            <person name="Takami S."/>
            <person name="Terashima Y."/>
            <person name="Suzuki O."/>
            <person name="Nakagawa S."/>
            <person name="Senoh A."/>
            <person name="Mizoguchi H."/>
            <person name="Goto Y."/>
            <person name="Shimizu F."/>
            <person name="Wakebe H."/>
            <person name="Hishigaki H."/>
            <person name="Watanabe T."/>
            <person name="Sugiyama A."/>
            <person name="Takemoto M."/>
            <person name="Kawakami B."/>
            <person name="Yamazaki M."/>
            <person name="Watanabe K."/>
            <person name="Kumagai A."/>
            <person name="Itakura S."/>
            <person name="Fukuzumi Y."/>
            <person name="Fujimori Y."/>
            <person name="Komiyama M."/>
            <person name="Tashiro H."/>
            <person name="Tanigami A."/>
            <person name="Fujiwara T."/>
            <person name="Ono T."/>
            <person name="Yamada K."/>
            <person name="Fujii Y."/>
            <person name="Ozaki K."/>
            <person name="Hirao M."/>
            <person name="Ohmori Y."/>
            <person name="Kawabata A."/>
            <person name="Hikiji T."/>
            <person name="Kobatake N."/>
            <person name="Inagaki H."/>
            <person name="Ikema Y."/>
            <person name="Okamoto S."/>
            <person name="Okitani R."/>
            <person name="Kawakami T."/>
            <person name="Noguchi S."/>
            <person name="Itoh T."/>
            <person name="Shigeta K."/>
            <person name="Senba T."/>
            <person name="Matsumura K."/>
            <person name="Nakajima Y."/>
            <person name="Mizuno T."/>
            <person name="Morinaga M."/>
            <person name="Sasaki M."/>
            <person name="Togashi T."/>
            <person name="Oyama M."/>
            <person name="Hata H."/>
            <person name="Watanabe M."/>
            <person name="Komatsu T."/>
            <person name="Mizushima-Sugano J."/>
            <person name="Satoh T."/>
            <person name="Shirai Y."/>
            <person name="Takahashi Y."/>
            <person name="Nakagawa K."/>
            <person name="Okumura K."/>
            <person name="Nagase T."/>
            <person name="Nomura N."/>
            <person name="Kikuchi H."/>
            <person name="Masuho Y."/>
            <person name="Yamashita R."/>
            <person name="Nakai K."/>
            <person name="Yada T."/>
            <person name="Nakamura Y."/>
            <person name="Ohara O."/>
            <person name="Isogai T."/>
            <person name="Sugano S."/>
        </authorList>
    </citation>
    <scope>NUCLEOTIDE SEQUENCE [LARGE SCALE MRNA]</scope>
</reference>
<reference key="3">
    <citation type="submission" date="2005-09" db="EMBL/GenBank/DDBJ databases">
        <authorList>
            <person name="Mural R.J."/>
            <person name="Istrail S."/>
            <person name="Sutton G.G."/>
            <person name="Florea L."/>
            <person name="Halpern A.L."/>
            <person name="Mobarry C.M."/>
            <person name="Lippert R."/>
            <person name="Walenz B."/>
            <person name="Shatkay H."/>
            <person name="Dew I."/>
            <person name="Miller J.R."/>
            <person name="Flanigan M.J."/>
            <person name="Edwards N.J."/>
            <person name="Bolanos R."/>
            <person name="Fasulo D."/>
            <person name="Halldorsson B.V."/>
            <person name="Hannenhalli S."/>
            <person name="Turner R."/>
            <person name="Yooseph S."/>
            <person name="Lu F."/>
            <person name="Nusskern D.R."/>
            <person name="Shue B.C."/>
            <person name="Zheng X.H."/>
            <person name="Zhong F."/>
            <person name="Delcher A.L."/>
            <person name="Huson D.H."/>
            <person name="Kravitz S.A."/>
            <person name="Mouchard L."/>
            <person name="Reinert K."/>
            <person name="Remington K.A."/>
            <person name="Clark A.G."/>
            <person name="Waterman M.S."/>
            <person name="Eichler E.E."/>
            <person name="Adams M.D."/>
            <person name="Hunkapiller M.W."/>
            <person name="Myers E.W."/>
            <person name="Venter J.C."/>
        </authorList>
    </citation>
    <scope>NUCLEOTIDE SEQUENCE [LARGE SCALE GENOMIC DNA]</scope>
</reference>
<reference key="4">
    <citation type="journal article" date="2004" name="Genome Res.">
        <title>The status, quality, and expansion of the NIH full-length cDNA project: the Mammalian Gene Collection (MGC).</title>
        <authorList>
            <consortium name="The MGC Project Team"/>
        </authorList>
    </citation>
    <scope>NUCLEOTIDE SEQUENCE [LARGE SCALE MRNA]</scope>
    <source>
        <tissue>Lung</tissue>
        <tissue>Uterus</tissue>
    </source>
</reference>
<reference key="5">
    <citation type="journal article" date="2005" name="J. Biol. Chem.">
        <title>Human acyl-CoA dehydrogenase-9 plays a novel role in the mitochondrial beta-oxidation of unsaturated fatty acids.</title>
        <authorList>
            <person name="Ensenauer R."/>
            <person name="He M."/>
            <person name="Willard J.M."/>
            <person name="Goetzman E.S."/>
            <person name="Corydon T.J."/>
            <person name="Vandahl B.B."/>
            <person name="Mohsen A.W."/>
            <person name="Isaya G."/>
            <person name="Vockley J."/>
        </authorList>
    </citation>
    <scope>FUNCTION</scope>
    <scope>SUBSTRATE SPECIFICITY</scope>
    <scope>CATALYTIC ACTIVITY</scope>
    <scope>COFACTOR</scope>
    <scope>BIOPHYSICOCHEMICAL PROPERTIES</scope>
    <scope>SUBUNIT</scope>
    <scope>SUBCELLULAR LOCATION</scope>
    <scope>CLEAVAGE OF TRANSIT PEPTIDE AFTER ARG-37</scope>
</reference>
<reference key="6">
    <citation type="journal article" date="2007" name="Am. J. Hum. Genet.">
        <title>A new genetic disorder in mitochondrial fatty acid beta-oxidation: ACAD9 deficiency.</title>
        <authorList>
            <person name="He M."/>
            <person name="Rutledge S.L."/>
            <person name="Kelly D.R."/>
            <person name="Palmer C.A."/>
            <person name="Murdoch G."/>
            <person name="Majumder N."/>
            <person name="Nicholls R.D."/>
            <person name="Pei Z."/>
            <person name="Watkins P.A."/>
            <person name="Vockley J."/>
        </authorList>
    </citation>
    <scope>INVOLVEMENT IN MC1DN20</scope>
</reference>
<reference key="7">
    <citation type="journal article" date="2009" name="Science">
        <title>Lysine acetylation targets protein complexes and co-regulates major cellular functions.</title>
        <authorList>
            <person name="Choudhary C."/>
            <person name="Kumar C."/>
            <person name="Gnad F."/>
            <person name="Nielsen M.L."/>
            <person name="Rehman M."/>
            <person name="Walther T.C."/>
            <person name="Olsen J.V."/>
            <person name="Mann M."/>
        </authorList>
    </citation>
    <scope>ACETYLATION [LARGE SCALE ANALYSIS] AT LYS-41</scope>
    <scope>IDENTIFICATION BY MASS SPECTROMETRY [LARGE SCALE ANALYSIS]</scope>
</reference>
<reference key="8">
    <citation type="journal article" date="2010" name="Cell Metab.">
        <title>Acyl-CoA dehydrogenase 9 is required for the biogenesis of oxidative phosphorylation complex I.</title>
        <authorList>
            <person name="Nouws J."/>
            <person name="Nijtmans L."/>
            <person name="Houten S.M."/>
            <person name="van den Brand M."/>
            <person name="Huynen M."/>
            <person name="Venselaar H."/>
            <person name="Hoefs S."/>
            <person name="Gloerich J."/>
            <person name="Kronick J."/>
            <person name="Hutchin T."/>
            <person name="Willems P."/>
            <person name="Rodenburg R."/>
            <person name="Wanders R."/>
            <person name="van den Heuvel L."/>
            <person name="Smeitink J."/>
            <person name="Vogel R.O."/>
        </authorList>
    </citation>
    <scope>FUNCTION</scope>
    <scope>SUBCELLULAR LOCATION</scope>
    <scope>INTERACTION WITH NDUFAF1 AND ECSIT</scope>
    <scope>INVOLVEMENT IN MC1DN20</scope>
    <scope>VARIANTS MC1DN20 LYS-413 AND HIS-518</scope>
</reference>
<reference key="9">
    <citation type="journal article" date="2010" name="Nat. Genet.">
        <title>Exome sequencing identifies ACAD9 mutations as a cause of complex I deficiency.</title>
        <authorList>
            <person name="Haack T.B."/>
            <person name="Danhauser K."/>
            <person name="Haberberger B."/>
            <person name="Hoser J."/>
            <person name="Strecker V."/>
            <person name="Boehm D."/>
            <person name="Uziel G."/>
            <person name="Lamantea E."/>
            <person name="Invernizzi F."/>
            <person name="Poulton J."/>
            <person name="Rolinski B."/>
            <person name="Iuso A."/>
            <person name="Biskup S."/>
            <person name="Schmidt T."/>
            <person name="Mewes H.W."/>
            <person name="Wittig I."/>
            <person name="Meitinger T."/>
            <person name="Zeviani M."/>
            <person name="Prokisch H."/>
        </authorList>
    </citation>
    <scope>INVOLVEMENT IN MC1DN20</scope>
    <scope>VARIANTS MC1DN20 ILE-44; TRP-193; PHE-234; GLN-266; SER-303; THR-326; CYS-417 AND TRP-532</scope>
</reference>
<reference key="10">
    <citation type="journal article" date="2011" name="BMC Syst. Biol.">
        <title>Initial characterization of the human central proteome.</title>
        <authorList>
            <person name="Burkard T.R."/>
            <person name="Planyavsky M."/>
            <person name="Kaupe I."/>
            <person name="Breitwieser F.P."/>
            <person name="Buerckstuemmer T."/>
            <person name="Bennett K.L."/>
            <person name="Superti-Furga G."/>
            <person name="Colinge J."/>
        </authorList>
    </citation>
    <scope>IDENTIFICATION BY MASS SPECTROMETRY [LARGE SCALE ANALYSIS]</scope>
</reference>
<reference key="11">
    <citation type="journal article" date="2011" name="Mol. Genet. Metab.">
        <title>Identification and characterization of new long chain acyl-CoA dehydrogenases.</title>
        <authorList>
            <person name="He M."/>
            <person name="Pei Z."/>
            <person name="Mohsen A.W."/>
            <person name="Watkins P."/>
            <person name="Murdoch G."/>
            <person name="Van Veldhoven P.P."/>
            <person name="Ensenauer R."/>
            <person name="Vockley J."/>
        </authorList>
    </citation>
    <scope>FUNCTION</scope>
    <scope>CATALYTIC ACTIVITY</scope>
    <scope>TISSUE SPECIFICITY</scope>
</reference>
<reference key="12">
    <citation type="journal article" date="2014" name="Hum. Mol. Genet.">
        <title>ACAD9, a complex I assembly factor with a moonlighting function in fatty acid oxidation deficiencies.</title>
        <authorList>
            <person name="Nouws J."/>
            <person name="Te Brinke H."/>
            <person name="Nijtmans L.G."/>
            <person name="Houten S.M."/>
        </authorList>
    </citation>
    <scope>FUNCTION</scope>
    <scope>CATALYTIC ACTIVITY</scope>
    <scope>ACTIVE SITE</scope>
    <scope>MUTAGENESIS OF GLU-426</scope>
</reference>
<reference key="13">
    <citation type="journal article" date="2014" name="J. Proteomics">
        <title>An enzyme assisted RP-RPLC approach for in-depth analysis of human liver phosphoproteome.</title>
        <authorList>
            <person name="Bian Y."/>
            <person name="Song C."/>
            <person name="Cheng K."/>
            <person name="Dong M."/>
            <person name="Wang F."/>
            <person name="Huang J."/>
            <person name="Sun D."/>
            <person name="Wang L."/>
            <person name="Ye M."/>
            <person name="Zou H."/>
        </authorList>
    </citation>
    <scope>IDENTIFICATION BY MASS SPECTROMETRY [LARGE SCALE ANALYSIS]</scope>
    <source>
        <tissue>Liver</tissue>
    </source>
</reference>
<reference key="14">
    <citation type="journal article" date="2015" name="Proteomics">
        <title>N-terminome analysis of the human mitochondrial proteome.</title>
        <authorList>
            <person name="Vaca Jacome A.S."/>
            <person name="Rabilloud T."/>
            <person name="Schaeffer-Reiss C."/>
            <person name="Rompais M."/>
            <person name="Ayoub D."/>
            <person name="Lane L."/>
            <person name="Bairoch A."/>
            <person name="Van Dorsselaer A."/>
            <person name="Carapito C."/>
        </authorList>
    </citation>
    <scope>IDENTIFICATION BY MASS SPECTROMETRY [LARGE SCALE ANALYSIS]</scope>
</reference>
<reference key="15">
    <citation type="journal article" date="2020" name="Cell Rep.">
        <title>Dissecting the Roles of Mitochondrial Complex I Intermediate Assembly Complex Factors in the Biogenesis of Complex I.</title>
        <authorList>
            <person name="Formosa L.E."/>
            <person name="Muellner-Wong L."/>
            <person name="Reljic B."/>
            <person name="Sharpe A.J."/>
            <person name="Jackson T.D."/>
            <person name="Beilharz T.H."/>
            <person name="Stojanovski D."/>
            <person name="Lazarou M."/>
            <person name="Stroud D.A."/>
            <person name="Ryan M.T."/>
        </authorList>
    </citation>
    <scope>IDENTIFICATION IN THE MCIA COMPLEX</scope>
    <scope>FUNCTION</scope>
</reference>
<reference key="16">
    <citation type="journal article" date="2021" name="Proc. Natl. Acad. Sci. U.S.A.">
        <title>TMEM70 and TMEM242 help to assemble the rotor ring of human ATP synthase and interact with assembly factors for complex I.</title>
        <authorList>
            <person name="Carroll J."/>
            <person name="He J."/>
            <person name="Ding S."/>
            <person name="Fearnley I.M."/>
            <person name="Walker J.E."/>
        </authorList>
    </citation>
    <scope>INTERACTION WITH TMEM70 AND TMEM242</scope>
</reference>
<reference key="17">
    <citation type="journal article" date="2011" name="Brain">
        <title>Riboflavin-responsive oxidative phosphorylation complex I deficiency caused by defective ACAD9: new function for an old gene.</title>
        <authorList>
            <person name="Gerards M."/>
            <person name="van den Bosch B.J."/>
            <person name="Danhauser K."/>
            <person name="Serre V."/>
            <person name="van Weeghel M."/>
            <person name="Wanders R.J."/>
            <person name="Nicolaes G.A."/>
            <person name="Sluiter W."/>
            <person name="Schoonderwoerd K."/>
            <person name="Scholte H.R."/>
            <person name="Prokisch H."/>
            <person name="Rotig A."/>
            <person name="de Coo I.F."/>
            <person name="Smeets H.J."/>
        </authorList>
    </citation>
    <scope>VARIANTS MC1DN20 LYS-127; TRP-469 AND TRP-532</scope>
</reference>
<reference key="18">
    <citation type="journal article" date="2012" name="J. Med. Genet.">
        <title>Molecular diagnosis in mitochondrial complex I deficiency using exome sequencing.</title>
        <authorList>
            <person name="Haack T.B."/>
            <person name="Haberberger B."/>
            <person name="Frisch E.M."/>
            <person name="Wieland T."/>
            <person name="Iuso A."/>
            <person name="Gorza M."/>
            <person name="Strecker V."/>
            <person name="Graf E."/>
            <person name="Mayr J.A."/>
            <person name="Herberg U."/>
            <person name="Hennermann J.B."/>
            <person name="Klopstock T."/>
            <person name="Kuhn K.A."/>
            <person name="Ahting U."/>
            <person name="Sperl W."/>
            <person name="Wilichowski E."/>
            <person name="Hoffmann G.F."/>
            <person name="Tesarova M."/>
            <person name="Hansikova H."/>
            <person name="Zeman J."/>
            <person name="Plecko B."/>
            <person name="Zeviani M."/>
            <person name="Wittig I."/>
            <person name="Strom T.M."/>
            <person name="Schuelke M."/>
            <person name="Freisinger P."/>
            <person name="Meitinger T."/>
            <person name="Prokisch H."/>
        </authorList>
    </citation>
    <scope>VARIANT MC1DN20 TRP-532</scope>
</reference>
<reference key="19">
    <citation type="journal article" date="2013" name="JAMA Neurol.">
        <title>Mitochondrial encephalomyopathy due to a novel mutation in ACAD9.</title>
        <authorList>
            <person name="Garone C."/>
            <person name="Donati M.A."/>
            <person name="Sacchini M."/>
            <person name="Garcia-Diaz B."/>
            <person name="Bruno C."/>
            <person name="Calvo S."/>
            <person name="Mootha V.K."/>
            <person name="Dimauro S."/>
        </authorList>
    </citation>
    <scope>VARIANT MC1DN20 CYS-414</scope>
</reference>
<reference key="20">
    <citation type="journal article" date="2014" name="JIMD Rep.">
        <title>A patient with complex I deficiency caused by a novel ACAD9 mutation not responding to riboflavin treatment.</title>
        <authorList>
            <person name="Nouws J."/>
            <person name="Wibrand F."/>
            <person name="van den Brand M."/>
            <person name="Venselaar H."/>
            <person name="Duno M."/>
            <person name="Lund A.M."/>
            <person name="Trautner S."/>
            <person name="Nijtmans L."/>
            <person name="Ostergard E."/>
        </authorList>
    </citation>
    <scope>VARIANT MC1DN20 VAL-220</scope>
</reference>
<reference key="21">
    <citation type="journal article" date="2016" name="PLoS Genet.">
        <title>A comprehensive genomic analysis reveals the genetic landscape of mitochondrial respiratory chain complex deficiencies.</title>
        <authorList>
            <person name="Kohda M."/>
            <person name="Tokuzawa Y."/>
            <person name="Kishita Y."/>
            <person name="Nyuzuki H."/>
            <person name="Moriyama Y."/>
            <person name="Mizuno Y."/>
            <person name="Hirata T."/>
            <person name="Yatsuka Y."/>
            <person name="Yamashita-Sugahara Y."/>
            <person name="Nakachi Y."/>
            <person name="Kato H."/>
            <person name="Okuda A."/>
            <person name="Tamaru S."/>
            <person name="Borna N.N."/>
            <person name="Banshoya K."/>
            <person name="Aigaki T."/>
            <person name="Sato-Miyata Y."/>
            <person name="Ohnuma K."/>
            <person name="Suzuki T."/>
            <person name="Nagao A."/>
            <person name="Maehata H."/>
            <person name="Matsuda F."/>
            <person name="Higasa K."/>
            <person name="Nagasaki M."/>
            <person name="Yasuda J."/>
            <person name="Yamamoto M."/>
            <person name="Fushimi T."/>
            <person name="Shimura M."/>
            <person name="Kaiho-Ichimoto K."/>
            <person name="Harashima H."/>
            <person name="Yamazaki T."/>
            <person name="Mori M."/>
            <person name="Murayama K."/>
            <person name="Ohtake A."/>
            <person name="Okazaki Y."/>
        </authorList>
    </citation>
    <scope>VARIANTS MC1DN20 GLY-271; MET-384 AND HIS-606</scope>
</reference>
<name>ACAD9_HUMAN</name>
<sequence>MSGCGLFLRTTAAARACRGLVVSTANRRLLRTSPPVRAFAKELFLGKIKKKEVFPFPEVSQDELNEINQFLGPVEKFFTEEVDSRKIDQEGKIPDETLEKLKSLGLFGLQVPEEYGGLGFSNTMYSRLGEIISMDGSITVTLAAHQAIGLKGIILAGTEEQKAKYLPKLASGEHIAAFCLTEPASGSDAASIRSRATLSEDKKHYILNGSKVWITNGGLANIFTVFAKTEVVDSDGSVKDKITAFIVERDFGGVTNGKPEDKLGIRGSNTCEVHFENTKIPVENILGEVGDGFKVAMNILNSGRFSMGSVVAGLLKRLIEMTAEYACTRKQFNKRLSEFGLIQEKFALMAQKAYVMESMTYLTAGMLDQPGFPDCSIEAAMVKVFSSEAAWQCVSEALQILGGLGYTRDYPYERILRDTRILLIFEGTNEILRMYIALTGLQHAGRILTTRIHELKQAKVSTVMDTVGRRLRDSLGRTVDLGLTGNHGVVHPSLADSANKFEENTYCFGRTVETLLLRFGKTIMEEQLVLKRVANILINLYGMTAVLSRASRSIRIGLRNHDHEVLLANTFCVEAYLQNLFSLSQLDKYAPENLDEQIKKVSQQILEKRAYICAHPLDRTC</sequence>
<evidence type="ECO:0000250" key="1">
    <source>
        <dbReference type="UniProtKB" id="Q8JZN5"/>
    </source>
</evidence>
<evidence type="ECO:0000269" key="2">
    <source>
    </source>
</evidence>
<evidence type="ECO:0000269" key="3">
    <source>
    </source>
</evidence>
<evidence type="ECO:0000269" key="4">
    <source>
    </source>
</evidence>
<evidence type="ECO:0000269" key="5">
    <source>
    </source>
</evidence>
<evidence type="ECO:0000269" key="6">
    <source>
    </source>
</evidence>
<evidence type="ECO:0000269" key="7">
    <source>
    </source>
</evidence>
<evidence type="ECO:0000269" key="8">
    <source>
    </source>
</evidence>
<evidence type="ECO:0000269" key="9">
    <source>
    </source>
</evidence>
<evidence type="ECO:0000269" key="10">
    <source>
    </source>
</evidence>
<evidence type="ECO:0000269" key="11">
    <source>
    </source>
</evidence>
<evidence type="ECO:0000269" key="12">
    <source>
    </source>
</evidence>
<evidence type="ECO:0000269" key="13">
    <source>
    </source>
</evidence>
<evidence type="ECO:0000269" key="14">
    <source>
    </source>
</evidence>
<evidence type="ECO:0000269" key="15">
    <source>
    </source>
</evidence>
<evidence type="ECO:0000303" key="16">
    <source>
    </source>
</evidence>
<evidence type="ECO:0000303" key="17">
    <source>
    </source>
</evidence>
<evidence type="ECO:0000305" key="18"/>
<evidence type="ECO:0000305" key="19">
    <source>
    </source>
</evidence>
<evidence type="ECO:0000305" key="20">
    <source>
    </source>
</evidence>
<evidence type="ECO:0000312" key="21">
    <source>
        <dbReference type="HGNC" id="HGNC:21497"/>
    </source>
</evidence>
<evidence type="ECO:0007744" key="22">
    <source>
    </source>
</evidence>
<evidence type="ECO:0007829" key="23">
    <source>
        <dbReference type="PDB" id="8PHE"/>
    </source>
</evidence>
<comment type="function">
    <text evidence="2 3 5 8 12 14">As part of the MCIA complex, primarily participates in the assembly of the mitochondrial complex I and therefore plays a role in oxidative phosphorylation (PubMed:20816094, PubMed:24158852, PubMed:32320651). This moonlighting protein also has a dehydrogenase activity toward a broad range of substrates with greater specificity for long-chain unsaturated acyl-CoAs (PubMed:12359260, PubMed:16020546, PubMed:21237683, PubMed:24158852). However, in vivo, it does not seem to play a primary role in fatty acid oxidation (PubMed:20816094, PubMed:24158852). In addition, the function in complex I assembly is independent of the dehydrogenase activity of the protein (PubMed:24158852).</text>
</comment>
<comment type="catalytic activity">
    <reaction evidence="3 8">
        <text>eicosanoyl-CoA + oxidized [electron-transfer flavoprotein] + H(+) = (2E)-eicosenoyl-CoA + reduced [electron-transfer flavoprotein]</text>
        <dbReference type="Rhea" id="RHEA:47236"/>
        <dbReference type="Rhea" id="RHEA-COMP:10685"/>
        <dbReference type="Rhea" id="RHEA-COMP:10686"/>
        <dbReference type="ChEBI" id="CHEBI:15378"/>
        <dbReference type="ChEBI" id="CHEBI:57380"/>
        <dbReference type="ChEBI" id="CHEBI:57692"/>
        <dbReference type="ChEBI" id="CHEBI:58307"/>
        <dbReference type="ChEBI" id="CHEBI:74691"/>
    </reaction>
    <physiologicalReaction direction="left-to-right" evidence="20">
        <dbReference type="Rhea" id="RHEA:47237"/>
    </physiologicalReaction>
</comment>
<comment type="catalytic activity">
    <reaction evidence="2 3 8">
        <text>octadecanoyl-CoA + oxidized [electron-transfer flavoprotein] + H(+) = (2E)-octadecenoyl-CoA + reduced [electron-transfer flavoprotein]</text>
        <dbReference type="Rhea" id="RHEA:47240"/>
        <dbReference type="Rhea" id="RHEA-COMP:10685"/>
        <dbReference type="Rhea" id="RHEA-COMP:10686"/>
        <dbReference type="ChEBI" id="CHEBI:15378"/>
        <dbReference type="ChEBI" id="CHEBI:57394"/>
        <dbReference type="ChEBI" id="CHEBI:57692"/>
        <dbReference type="ChEBI" id="CHEBI:58307"/>
        <dbReference type="ChEBI" id="CHEBI:71412"/>
    </reaction>
    <physiologicalReaction direction="left-to-right" evidence="20">
        <dbReference type="Rhea" id="RHEA:47241"/>
    </physiologicalReaction>
</comment>
<comment type="catalytic activity">
    <reaction evidence="2 3 8 12">
        <text>oxidized [electron-transfer flavoprotein] + hexadecanoyl-CoA + H(+) = (2E)-hexadecenoyl-CoA + reduced [electron-transfer flavoprotein]</text>
        <dbReference type="Rhea" id="RHEA:43448"/>
        <dbReference type="Rhea" id="RHEA-COMP:10685"/>
        <dbReference type="Rhea" id="RHEA-COMP:10686"/>
        <dbReference type="ChEBI" id="CHEBI:15378"/>
        <dbReference type="ChEBI" id="CHEBI:57379"/>
        <dbReference type="ChEBI" id="CHEBI:57692"/>
        <dbReference type="ChEBI" id="CHEBI:58307"/>
        <dbReference type="ChEBI" id="CHEBI:61526"/>
    </reaction>
    <physiologicalReaction direction="left-to-right" evidence="20">
        <dbReference type="Rhea" id="RHEA:43449"/>
    </physiologicalReaction>
</comment>
<comment type="catalytic activity">
    <reaction evidence="3">
        <text>decanoyl-CoA + oxidized [electron-transfer flavoprotein] + H(+) = (2E)-decenoyl-CoA + reduced [electron-transfer flavoprotein]</text>
        <dbReference type="Rhea" id="RHEA:48176"/>
        <dbReference type="Rhea" id="RHEA-COMP:10685"/>
        <dbReference type="Rhea" id="RHEA-COMP:10686"/>
        <dbReference type="ChEBI" id="CHEBI:15378"/>
        <dbReference type="ChEBI" id="CHEBI:57692"/>
        <dbReference type="ChEBI" id="CHEBI:58307"/>
        <dbReference type="ChEBI" id="CHEBI:61406"/>
        <dbReference type="ChEBI" id="CHEBI:61430"/>
    </reaction>
    <physiologicalReaction direction="left-to-right" evidence="20">
        <dbReference type="Rhea" id="RHEA:48177"/>
    </physiologicalReaction>
</comment>
<comment type="catalytic activity">
    <reaction evidence="3">
        <text>nonanoyl-CoA + oxidized [electron-transfer flavoprotein] + H(+) = (2E)-nonenoyl-CoA + reduced [electron-transfer flavoprotein]</text>
        <dbReference type="Rhea" id="RHEA:48208"/>
        <dbReference type="Rhea" id="RHEA-COMP:10685"/>
        <dbReference type="Rhea" id="RHEA-COMP:10686"/>
        <dbReference type="ChEBI" id="CHEBI:15378"/>
        <dbReference type="ChEBI" id="CHEBI:57692"/>
        <dbReference type="ChEBI" id="CHEBI:58307"/>
        <dbReference type="ChEBI" id="CHEBI:76291"/>
        <dbReference type="ChEBI" id="CHEBI:76292"/>
    </reaction>
    <physiologicalReaction direction="left-to-right" evidence="20">
        <dbReference type="Rhea" id="RHEA:48209"/>
    </physiologicalReaction>
</comment>
<comment type="catalytic activity">
    <reaction evidence="3">
        <text>pentadecanoyl-CoA + oxidized [electron-transfer flavoprotein] + H(+) = (2E)-pentadecenoyl-CoA + reduced [electron-transfer flavoprotein]</text>
        <dbReference type="Rhea" id="RHEA:48204"/>
        <dbReference type="Rhea" id="RHEA-COMP:10685"/>
        <dbReference type="Rhea" id="RHEA-COMP:10686"/>
        <dbReference type="ChEBI" id="CHEBI:15378"/>
        <dbReference type="ChEBI" id="CHEBI:57692"/>
        <dbReference type="ChEBI" id="CHEBI:58307"/>
        <dbReference type="ChEBI" id="CHEBI:74309"/>
        <dbReference type="ChEBI" id="CHEBI:77545"/>
    </reaction>
    <physiologicalReaction direction="left-to-right" evidence="20">
        <dbReference type="Rhea" id="RHEA:48205"/>
    </physiologicalReaction>
</comment>
<comment type="catalytic activity">
    <reaction evidence="3">
        <text>undecanoyl-CoA + oxidized [electron-transfer flavoprotein] + H(+) = trans-2-undecenoyl-CoA + reduced [electron-transfer flavoprotein]</text>
        <dbReference type="Rhea" id="RHEA:48200"/>
        <dbReference type="Rhea" id="RHEA-COMP:10685"/>
        <dbReference type="Rhea" id="RHEA-COMP:10686"/>
        <dbReference type="ChEBI" id="CHEBI:15378"/>
        <dbReference type="ChEBI" id="CHEBI:57692"/>
        <dbReference type="ChEBI" id="CHEBI:58307"/>
        <dbReference type="ChEBI" id="CHEBI:77547"/>
        <dbReference type="ChEBI" id="CHEBI:77548"/>
    </reaction>
    <physiologicalReaction direction="left-to-right" evidence="20">
        <dbReference type="Rhea" id="RHEA:48201"/>
    </physiologicalReaction>
</comment>
<comment type="catalytic activity">
    <reaction evidence="3">
        <text>(9Z)-hexadecenoyl-CoA + oxidized [electron-transfer flavoprotein] + H(+) = (2E,9Z)-hexadecadienoyl-CoA + reduced [electron-transfer flavoprotein]</text>
        <dbReference type="Rhea" id="RHEA:47304"/>
        <dbReference type="Rhea" id="RHEA-COMP:10685"/>
        <dbReference type="Rhea" id="RHEA-COMP:10686"/>
        <dbReference type="ChEBI" id="CHEBI:15378"/>
        <dbReference type="ChEBI" id="CHEBI:57692"/>
        <dbReference type="ChEBI" id="CHEBI:58307"/>
        <dbReference type="ChEBI" id="CHEBI:61540"/>
        <dbReference type="ChEBI" id="CHEBI:77549"/>
    </reaction>
    <physiologicalReaction direction="left-to-right" evidence="20">
        <dbReference type="Rhea" id="RHEA:47305"/>
    </physiologicalReaction>
</comment>
<comment type="catalytic activity">
    <reaction evidence="3">
        <text>heptadecanoyl-CoA + oxidized [electron-transfer flavoprotein] + H(+) = trans-2-heptadecenoyl-CoA + reduced [electron-transfer flavoprotein]</text>
        <dbReference type="Rhea" id="RHEA:48196"/>
        <dbReference type="Rhea" id="RHEA-COMP:10685"/>
        <dbReference type="Rhea" id="RHEA-COMP:10686"/>
        <dbReference type="ChEBI" id="CHEBI:15378"/>
        <dbReference type="ChEBI" id="CHEBI:57692"/>
        <dbReference type="ChEBI" id="CHEBI:58307"/>
        <dbReference type="ChEBI" id="CHEBI:74307"/>
        <dbReference type="ChEBI" id="CHEBI:77551"/>
    </reaction>
    <physiologicalReaction direction="left-to-right" evidence="20">
        <dbReference type="Rhea" id="RHEA:48197"/>
    </physiologicalReaction>
</comment>
<comment type="catalytic activity">
    <reaction evidence="3">
        <text>(9E)-octadecenoyl-CoA + oxidized [electron-transfer flavoprotein] + H(+) = (2E,9E)-octadecadienoyl-CoA + reduced [electron-transfer flavoprotein]</text>
        <dbReference type="Rhea" id="RHEA:48192"/>
        <dbReference type="Rhea" id="RHEA-COMP:10685"/>
        <dbReference type="Rhea" id="RHEA-COMP:10686"/>
        <dbReference type="ChEBI" id="CHEBI:15378"/>
        <dbReference type="ChEBI" id="CHEBI:57692"/>
        <dbReference type="ChEBI" id="CHEBI:58307"/>
        <dbReference type="ChEBI" id="CHEBI:77537"/>
        <dbReference type="ChEBI" id="CHEBI:77552"/>
    </reaction>
    <physiologicalReaction direction="left-to-right" evidence="20">
        <dbReference type="Rhea" id="RHEA:48193"/>
    </physiologicalReaction>
</comment>
<comment type="catalytic activity">
    <reaction evidence="3">
        <text>oxidized [electron-transfer flavoprotein] + (9Z)-octadecenoyl-CoA + H(+) = (2E,9Z)-octadecadienoyl-CoA + reduced [electron-transfer flavoprotein]</text>
        <dbReference type="Rhea" id="RHEA:47300"/>
        <dbReference type="Rhea" id="RHEA-COMP:10685"/>
        <dbReference type="Rhea" id="RHEA-COMP:10686"/>
        <dbReference type="ChEBI" id="CHEBI:15378"/>
        <dbReference type="ChEBI" id="CHEBI:57387"/>
        <dbReference type="ChEBI" id="CHEBI:57692"/>
        <dbReference type="ChEBI" id="CHEBI:58307"/>
        <dbReference type="ChEBI" id="CHEBI:77553"/>
    </reaction>
    <physiologicalReaction direction="left-to-right" evidence="20">
        <dbReference type="Rhea" id="RHEA:47301"/>
    </physiologicalReaction>
</comment>
<comment type="catalytic activity">
    <reaction evidence="3">
        <text>(9Z,12Z)-octadecadienoyl-CoA + oxidized [electron-transfer flavoprotein] + H(+) = (2E,9Z,12Z)-octadecatrienoyl-CoA + reduced [electron-transfer flavoprotein]</text>
        <dbReference type="Rhea" id="RHEA:48188"/>
        <dbReference type="Rhea" id="RHEA-COMP:10685"/>
        <dbReference type="Rhea" id="RHEA-COMP:10686"/>
        <dbReference type="ChEBI" id="CHEBI:15378"/>
        <dbReference type="ChEBI" id="CHEBI:57383"/>
        <dbReference type="ChEBI" id="CHEBI:57692"/>
        <dbReference type="ChEBI" id="CHEBI:58307"/>
        <dbReference type="ChEBI" id="CHEBI:77558"/>
    </reaction>
    <physiologicalReaction direction="left-to-right" evidence="20">
        <dbReference type="Rhea" id="RHEA:48189"/>
    </physiologicalReaction>
</comment>
<comment type="catalytic activity">
    <reaction evidence="3">
        <text>(4Z,7Z,10Z,13Z,16Z,19Z)-docosahexaenoyl-CoA + oxidized [electron-transfer flavoprotein] + H(+) = (2E,4Z,7Z,10Z,13Z,16Z,19Z)-docosaheptaenoyl-CoA + reduced [electron-transfer flavoprotein]</text>
        <dbReference type="Rhea" id="RHEA:48184"/>
        <dbReference type="Rhea" id="RHEA-COMP:10685"/>
        <dbReference type="Rhea" id="RHEA-COMP:10686"/>
        <dbReference type="ChEBI" id="CHEBI:15378"/>
        <dbReference type="ChEBI" id="CHEBI:57692"/>
        <dbReference type="ChEBI" id="CHEBI:58307"/>
        <dbReference type="ChEBI" id="CHEBI:74298"/>
        <dbReference type="ChEBI" id="CHEBI:77559"/>
    </reaction>
    <physiologicalReaction direction="left-to-right" evidence="20">
        <dbReference type="Rhea" id="RHEA:48185"/>
    </physiologicalReaction>
</comment>
<comment type="catalytic activity">
    <reaction evidence="8">
        <text>tetradecanoyl-CoA + oxidized [electron-transfer flavoprotein] + H(+) = (2E)-tetradecenoyl-CoA + reduced [electron-transfer flavoprotein]</text>
        <dbReference type="Rhea" id="RHEA:47316"/>
        <dbReference type="Rhea" id="RHEA-COMP:10685"/>
        <dbReference type="Rhea" id="RHEA-COMP:10686"/>
        <dbReference type="ChEBI" id="CHEBI:15378"/>
        <dbReference type="ChEBI" id="CHEBI:57385"/>
        <dbReference type="ChEBI" id="CHEBI:57692"/>
        <dbReference type="ChEBI" id="CHEBI:58307"/>
        <dbReference type="ChEBI" id="CHEBI:61405"/>
    </reaction>
    <physiologicalReaction direction="left-to-right" evidence="20">
        <dbReference type="Rhea" id="RHEA:47317"/>
    </physiologicalReaction>
</comment>
<comment type="cofactor">
    <cofactor evidence="19">
        <name>FAD</name>
        <dbReference type="ChEBI" id="CHEBI:57692"/>
    </cofactor>
</comment>
<comment type="biophysicochemical properties">
    <kinetics>
        <KM evidence="3">2.8 uM for hexadecanoyl-CoA</KM>
        <KM evidence="3">0.7 uM for (9Z)-hexadecenoyl-CoA</KM>
        <KM evidence="3">2.1 uM for (9Z,12Z)-octadecadienoyl-CoA</KM>
    </kinetics>
</comment>
<comment type="subunit">
    <text evidence="3 5 14 15">Homodimer (PubMed:16020546). Interacts with NDUFAF1 and ECSIT (PubMed:20816094). Part of the mitochondrial complex I assembly/MCIA complex that comprises at least the core subunits TMEM126B, NDUFAF1, ECSIT and ACAD9 and complement subunits such as COA1 and TMEM186 (PubMed:32320651). Interacts with TMEM70 and TMEM242 (PubMed:33753518).</text>
</comment>
<comment type="subcellular location">
    <subcellularLocation>
        <location evidence="3 5">Mitochondrion inner membrane</location>
        <topology evidence="3">Peripheral membrane protein</topology>
        <orientation evidence="3">Matrix side</orientation>
    </subcellularLocation>
    <text evidence="3">Essentially associated with membranes.</text>
</comment>
<comment type="tissue specificity">
    <text evidence="2 8">Ubiquitously expressed in most normal human tissues and cancer cell lines with high level of expression in heart, skeletal muscles, brain, kidney and liver (PubMed:12359260). In the cerebellum uniquely expressed in the granular layer (at protein level) (PubMed:21237683).</text>
</comment>
<comment type="disease" evidence="4 5 6 7 9 10 11 13">
    <disease id="DI-01173">
        <name>Mitochondrial complex I deficiency, nuclear type 20</name>
        <acronym>MC1DN20</acronym>
        <description>An autosomal recessive metabolic disorder associated with mitochondrial complex I deficiency, resulting in multisystemic and variable manifestations. Clinical features include infantile onset of acute metabolic acidosis, Reye-like episodes (brain edema and vomiting that may rapidly progress to seizures, coma and death), exercise intolerance, hypertrophic cardiomyopathy, liver failure, muscle weakness, and neurologic dysfunction.</description>
        <dbReference type="MIM" id="611126"/>
    </disease>
    <text>The disease is caused by variants affecting the gene represented in this entry.</text>
</comment>
<comment type="similarity">
    <text evidence="18">Belongs to the acyl-CoA dehydrogenase family.</text>
</comment>
<protein>
    <recommendedName>
        <fullName evidence="17">Complex I assembly factor ACAD9, mitochondrial</fullName>
    </recommendedName>
    <alternativeName>
        <fullName evidence="16">Acyl-CoA dehydrogenase family member 9</fullName>
        <shortName evidence="16">ACAD-9</shortName>
        <ecNumber evidence="2 3 8 12">1.3.8.-</ecNumber>
    </alternativeName>
</protein>